<gene>
    <name evidence="1" type="primary">selA</name>
    <name type="ordered locus">DMR_30540</name>
</gene>
<sequence length="470" mass="49666">MQNLFRLLPPVDAVLTALGDDVGLAALPRAMLRDAVTAYLDGLRDDIRAGRLTEPAQLDHGLVFAQCARQVAAATRPHFRRVINATGVVVHTNLGRSLLAPEAAAAAADACLRYSNLEFDLATGERGSRYSHVVDILRTLTGAEDALVVNNNAAAVMIVLETLAKGREVIVSRGQLVEIGGSFRIPEVMAKSGAVLREVGATNRTHLRDYENAVSPETAALLKVHTSNYRIVGFTKEVSLAELAELGARLGLPVIEDLGSGNLTDFAACGLPGEPTVQQAVAEGADVVTFSGDKVLGGPQAGIIVGKAKYIAAIRKNPLNRAMRIDKMTLAALEATLRLYRDPERARAVIPTLAMITASPEALAKKARKLAGLLRKALAGRYAVSAIPGASRVGGGAYPERDLPTTLVALRPLTGAPSPDALRQRLLAADPPLVARTQDDALLLDPRTLADDELKLVATVLAQACQPETA</sequence>
<accession>C4XIH0</accession>
<protein>
    <recommendedName>
        <fullName evidence="1">L-seryl-tRNA(Sec) selenium transferase</fullName>
        <ecNumber evidence="1">2.9.1.1</ecNumber>
    </recommendedName>
    <alternativeName>
        <fullName evidence="1">Selenocysteine synthase</fullName>
        <shortName evidence="1">Sec synthase</shortName>
    </alternativeName>
    <alternativeName>
        <fullName evidence="1">Selenocysteinyl-tRNA(Sec) synthase</fullName>
    </alternativeName>
</protein>
<organism>
    <name type="scientific">Solidesulfovibrio magneticus (strain ATCC 700980 / DSM 13731 / RS-1)</name>
    <name type="common">Desulfovibrio magneticus</name>
    <dbReference type="NCBI Taxonomy" id="573370"/>
    <lineage>
        <taxon>Bacteria</taxon>
        <taxon>Pseudomonadati</taxon>
        <taxon>Thermodesulfobacteriota</taxon>
        <taxon>Desulfovibrionia</taxon>
        <taxon>Desulfovibrionales</taxon>
        <taxon>Desulfovibrionaceae</taxon>
        <taxon>Solidesulfovibrio</taxon>
    </lineage>
</organism>
<comment type="function">
    <text evidence="1">Converts seryl-tRNA(Sec) to selenocysteinyl-tRNA(Sec) required for selenoprotein biosynthesis.</text>
</comment>
<comment type="catalytic activity">
    <reaction evidence="1">
        <text>L-seryl-tRNA(Sec) + selenophosphate + H(+) = L-selenocysteinyl-tRNA(Sec) + phosphate</text>
        <dbReference type="Rhea" id="RHEA:22728"/>
        <dbReference type="Rhea" id="RHEA-COMP:9742"/>
        <dbReference type="Rhea" id="RHEA-COMP:9743"/>
        <dbReference type="ChEBI" id="CHEBI:15378"/>
        <dbReference type="ChEBI" id="CHEBI:16144"/>
        <dbReference type="ChEBI" id="CHEBI:43474"/>
        <dbReference type="ChEBI" id="CHEBI:78533"/>
        <dbReference type="ChEBI" id="CHEBI:78573"/>
        <dbReference type="EC" id="2.9.1.1"/>
    </reaction>
</comment>
<comment type="cofactor">
    <cofactor evidence="1">
        <name>pyridoxal 5'-phosphate</name>
        <dbReference type="ChEBI" id="CHEBI:597326"/>
    </cofactor>
</comment>
<comment type="pathway">
    <text evidence="1">Aminoacyl-tRNA biosynthesis; selenocysteinyl-tRNA(Sec) biosynthesis; selenocysteinyl-tRNA(Sec) from L-seryl-tRNA(Sec) (bacterial route): step 1/1.</text>
</comment>
<comment type="subcellular location">
    <subcellularLocation>
        <location evidence="1">Cytoplasm</location>
    </subcellularLocation>
</comment>
<comment type="similarity">
    <text evidence="1">Belongs to the SelA family.</text>
</comment>
<name>SELA_SOLM1</name>
<keyword id="KW-0963">Cytoplasm</keyword>
<keyword id="KW-0648">Protein biosynthesis</keyword>
<keyword id="KW-0663">Pyridoxal phosphate</keyword>
<keyword id="KW-0711">Selenium</keyword>
<keyword id="KW-0808">Transferase</keyword>
<proteinExistence type="inferred from homology"/>
<reference key="1">
    <citation type="journal article" date="2009" name="Genome Res.">
        <title>Whole genome sequence of Desulfovibrio magneticus strain RS-1 revealed common gene clusters in magnetotactic bacteria.</title>
        <authorList>
            <person name="Nakazawa H."/>
            <person name="Arakaki A."/>
            <person name="Narita-Yamada S."/>
            <person name="Yashiro I."/>
            <person name="Jinno K."/>
            <person name="Aoki N."/>
            <person name="Tsuruyama A."/>
            <person name="Okamura Y."/>
            <person name="Tanikawa S."/>
            <person name="Fujita N."/>
            <person name="Takeyama H."/>
            <person name="Matsunaga T."/>
        </authorList>
    </citation>
    <scope>NUCLEOTIDE SEQUENCE [LARGE SCALE GENOMIC DNA]</scope>
    <source>
        <strain>ATCC 700980 / DSM 13731 / RS-1</strain>
    </source>
</reference>
<evidence type="ECO:0000255" key="1">
    <source>
        <dbReference type="HAMAP-Rule" id="MF_00423"/>
    </source>
</evidence>
<feature type="chain" id="PRO_1000206057" description="L-seryl-tRNA(Sec) selenium transferase">
    <location>
        <begin position="1"/>
        <end position="470"/>
    </location>
</feature>
<feature type="modified residue" description="N6-(pyridoxal phosphate)lysine" evidence="1">
    <location>
        <position position="294"/>
    </location>
</feature>
<dbReference type="EC" id="2.9.1.1" evidence="1"/>
<dbReference type="EMBL" id="AP010904">
    <property type="protein sequence ID" value="BAH76545.1"/>
    <property type="molecule type" value="Genomic_DNA"/>
</dbReference>
<dbReference type="RefSeq" id="WP_015861705.1">
    <property type="nucleotide sequence ID" value="NC_012796.1"/>
</dbReference>
<dbReference type="SMR" id="C4XIH0"/>
<dbReference type="STRING" id="573370.DMR_30540"/>
<dbReference type="KEGG" id="dma:DMR_30540"/>
<dbReference type="eggNOG" id="COG1921">
    <property type="taxonomic scope" value="Bacteria"/>
</dbReference>
<dbReference type="HOGENOM" id="CLU_038142_1_0_7"/>
<dbReference type="OrthoDB" id="9787096at2"/>
<dbReference type="UniPathway" id="UPA00906">
    <property type="reaction ID" value="UER00896"/>
</dbReference>
<dbReference type="Proteomes" id="UP000009071">
    <property type="component" value="Chromosome"/>
</dbReference>
<dbReference type="GO" id="GO:0005737">
    <property type="term" value="C:cytoplasm"/>
    <property type="evidence" value="ECO:0007669"/>
    <property type="project" value="UniProtKB-SubCell"/>
</dbReference>
<dbReference type="GO" id="GO:0004125">
    <property type="term" value="F:L-seryl-tRNA(Sec) selenium transferase activity"/>
    <property type="evidence" value="ECO:0007669"/>
    <property type="project" value="UniProtKB-UniRule"/>
</dbReference>
<dbReference type="GO" id="GO:0001717">
    <property type="term" value="P:conversion of seryl-tRNAsec to selenocys-tRNAsec"/>
    <property type="evidence" value="ECO:0007669"/>
    <property type="project" value="UniProtKB-UniRule"/>
</dbReference>
<dbReference type="GO" id="GO:0001514">
    <property type="term" value="P:selenocysteine incorporation"/>
    <property type="evidence" value="ECO:0007669"/>
    <property type="project" value="UniProtKB-UniRule"/>
</dbReference>
<dbReference type="Gene3D" id="3.90.1150.180">
    <property type="match status" value="1"/>
</dbReference>
<dbReference type="Gene3D" id="3.40.640.10">
    <property type="entry name" value="Type I PLP-dependent aspartate aminotransferase-like (Major domain)"/>
    <property type="match status" value="1"/>
</dbReference>
<dbReference type="HAMAP" id="MF_00423">
    <property type="entry name" value="SelA"/>
    <property type="match status" value="1"/>
</dbReference>
<dbReference type="InterPro" id="IPR015424">
    <property type="entry name" value="PyrdxlP-dep_Trfase"/>
</dbReference>
<dbReference type="InterPro" id="IPR015421">
    <property type="entry name" value="PyrdxlP-dep_Trfase_major"/>
</dbReference>
<dbReference type="InterPro" id="IPR018319">
    <property type="entry name" value="SelA-like"/>
</dbReference>
<dbReference type="InterPro" id="IPR004534">
    <property type="entry name" value="SelA_trans"/>
</dbReference>
<dbReference type="InterPro" id="IPR025862">
    <property type="entry name" value="SelA_trans_N_dom"/>
</dbReference>
<dbReference type="NCBIfam" id="TIGR00474">
    <property type="entry name" value="selA"/>
    <property type="match status" value="1"/>
</dbReference>
<dbReference type="PANTHER" id="PTHR32328">
    <property type="entry name" value="L-SERYL-TRNA(SEC) SELENIUM TRANSFERASE"/>
    <property type="match status" value="1"/>
</dbReference>
<dbReference type="PANTHER" id="PTHR32328:SF0">
    <property type="entry name" value="L-SERYL-TRNA(SEC) SELENIUM TRANSFERASE"/>
    <property type="match status" value="1"/>
</dbReference>
<dbReference type="Pfam" id="PF12390">
    <property type="entry name" value="Se-cys_synth_N"/>
    <property type="match status" value="1"/>
</dbReference>
<dbReference type="Pfam" id="PF03841">
    <property type="entry name" value="SelA"/>
    <property type="match status" value="1"/>
</dbReference>
<dbReference type="SUPFAM" id="SSF53383">
    <property type="entry name" value="PLP-dependent transferases"/>
    <property type="match status" value="1"/>
</dbReference>